<sequence>MSRKDNEVSLARSIFNILSGTFCSRITGIFREIAMATYFGADPIVAAFWLGFRTVFFLRKILGGLILEQAFIPHFEFLRAQSLDRAAFFFRRFSRLIKGSTIIFTLLIEAVLWVVLQYVEEGTYDMILLTMILLPCGIFLMMYNVNGALLHCENKFFGVGLAPVVVNIIWIFFVIAARHSDPRERIIGLSVALVIGFFFEWLITVPGVWKFLLEAKSPPQEHDSVRALLAPLSLGILTSSIFQLNLLSDICLARYVHEIGPLYLMYSLKIYQLPIHLFGFGVFTVLLPAISRCVQREDHERGLKLMKFVLTLTMSVMIIMTAGLLLLALPGVRVLYEHGLFPQSAVYAIVRVLRGYGASIIPMALAPLVSVLFYAQRQYAVPLFIGIGTALANIVLSLVLGRWVLKDVSGISYATSITAWVQLYFLWYYSSKRLPMYSKLLWESIRRSIKVMGTTMLACMITLGLNILTQTTYVIFLNPLTPLAWPLSSITAQAIAFLSESCIFLAFLFGFAKLLRVEDLINLASFEYWRGQRGLLQRQHVMQDTQN</sequence>
<reference key="1">
    <citation type="journal article" date="1999" name="Nat. Genet.">
        <title>Comparative genomes of Chlamydia pneumoniae and C. trachomatis.</title>
        <authorList>
            <person name="Kalman S."/>
            <person name="Mitchell W.P."/>
            <person name="Marathe R."/>
            <person name="Lammel C.J."/>
            <person name="Fan J."/>
            <person name="Hyman R.W."/>
            <person name="Olinger L."/>
            <person name="Grimwood J."/>
            <person name="Davis R.W."/>
            <person name="Stephens R.S."/>
        </authorList>
    </citation>
    <scope>NUCLEOTIDE SEQUENCE [LARGE SCALE GENOMIC DNA]</scope>
    <source>
        <strain>CWL029</strain>
    </source>
</reference>
<reference key="2">
    <citation type="journal article" date="2000" name="Nucleic Acids Res.">
        <title>Genome sequences of Chlamydia trachomatis MoPn and Chlamydia pneumoniae AR39.</title>
        <authorList>
            <person name="Read T.D."/>
            <person name="Brunham R.C."/>
            <person name="Shen C."/>
            <person name="Gill S.R."/>
            <person name="Heidelberg J.F."/>
            <person name="White O."/>
            <person name="Hickey E.K."/>
            <person name="Peterson J.D."/>
            <person name="Utterback T.R."/>
            <person name="Berry K.J."/>
            <person name="Bass S."/>
            <person name="Linher K.D."/>
            <person name="Weidman J.F."/>
            <person name="Khouri H.M."/>
            <person name="Craven B."/>
            <person name="Bowman C."/>
            <person name="Dodson R.J."/>
            <person name="Gwinn M.L."/>
            <person name="Nelson W.C."/>
            <person name="DeBoy R.T."/>
            <person name="Kolonay J.F."/>
            <person name="McClarty G."/>
            <person name="Salzberg S.L."/>
            <person name="Eisen J.A."/>
            <person name="Fraser C.M."/>
        </authorList>
    </citation>
    <scope>NUCLEOTIDE SEQUENCE [LARGE SCALE GENOMIC DNA]</scope>
    <source>
        <strain>AR39</strain>
    </source>
</reference>
<reference key="3">
    <citation type="journal article" date="2000" name="Nucleic Acids Res.">
        <title>Comparison of whole genome sequences of Chlamydia pneumoniae J138 from Japan and CWL029 from USA.</title>
        <authorList>
            <person name="Shirai M."/>
            <person name="Hirakawa H."/>
            <person name="Kimoto M."/>
            <person name="Tabuchi M."/>
            <person name="Kishi F."/>
            <person name="Ouchi K."/>
            <person name="Shiba T."/>
            <person name="Ishii K."/>
            <person name="Hattori M."/>
            <person name="Kuhara S."/>
            <person name="Nakazawa T."/>
        </authorList>
    </citation>
    <scope>NUCLEOTIDE SEQUENCE [LARGE SCALE GENOMIC DNA]</scope>
    <source>
        <strain>J138</strain>
    </source>
</reference>
<reference key="4">
    <citation type="submission" date="2002-05" db="EMBL/GenBank/DDBJ databases">
        <title>The genome sequence of Chlamydia pneumoniae TW183 and comparison with other Chlamydia strains based on whole genome sequence analysis.</title>
        <authorList>
            <person name="Geng M.M."/>
            <person name="Schuhmacher A."/>
            <person name="Muehldorfer I."/>
            <person name="Bensch K.W."/>
            <person name="Schaefer K.P."/>
            <person name="Schneider S."/>
            <person name="Pohl T."/>
            <person name="Essig A."/>
            <person name="Marre R."/>
            <person name="Melchers K."/>
        </authorList>
    </citation>
    <scope>NUCLEOTIDE SEQUENCE [LARGE SCALE GENOMIC DNA]</scope>
    <source>
        <strain>TW-183</strain>
    </source>
</reference>
<comment type="function">
    <text evidence="1">Involved in peptidoglycan biosynthesis. Transports lipid-linked peptidoglycan precursors from the inner to the outer leaflet of the cytoplasmic membrane.</text>
</comment>
<comment type="pathway">
    <text evidence="1">Cell wall biogenesis; peptidoglycan biosynthesis.</text>
</comment>
<comment type="subcellular location">
    <subcellularLocation>
        <location evidence="1">Cell inner membrane</location>
        <topology evidence="2">Multi-pass membrane protein</topology>
    </subcellularLocation>
</comment>
<comment type="similarity">
    <text evidence="3">Belongs to the MurJ/MviN family.</text>
</comment>
<protein>
    <recommendedName>
        <fullName evidence="1">Probable lipid II flippase MurJ</fullName>
    </recommendedName>
</protein>
<dbReference type="EMBL" id="AE001363">
    <property type="protein sequence ID" value="AAD18869.1"/>
    <property type="molecule type" value="Genomic_DNA"/>
</dbReference>
<dbReference type="EMBL" id="AE002161">
    <property type="protein sequence ID" value="AAF37912.1"/>
    <property type="molecule type" value="Genomic_DNA"/>
</dbReference>
<dbReference type="EMBL" id="BA000008">
    <property type="protein sequence ID" value="BAA98937.1"/>
    <property type="molecule type" value="Genomic_DNA"/>
</dbReference>
<dbReference type="EMBL" id="AE009440">
    <property type="protein sequence ID" value="AAP98687.1"/>
    <property type="molecule type" value="Genomic_DNA"/>
</dbReference>
<dbReference type="PIR" id="F72042">
    <property type="entry name" value="F72042"/>
</dbReference>
<dbReference type="PIR" id="G86581">
    <property type="entry name" value="G86581"/>
</dbReference>
<dbReference type="RefSeq" id="NP_224926.1">
    <property type="nucleotide sequence ID" value="NC_000922.1"/>
</dbReference>
<dbReference type="RefSeq" id="WP_010883368.1">
    <property type="nucleotide sequence ID" value="NZ_LN847257.1"/>
</dbReference>
<dbReference type="SMR" id="Q9Z7H5"/>
<dbReference type="STRING" id="406984.CPK_ORF00135"/>
<dbReference type="GeneID" id="45050786"/>
<dbReference type="KEGG" id="cpa:CP_0016"/>
<dbReference type="KEGG" id="cpj:mviN"/>
<dbReference type="KEGG" id="cpn:CPn_0730"/>
<dbReference type="KEGG" id="cpt:CpB0758"/>
<dbReference type="PATRIC" id="fig|115713.3.peg.805"/>
<dbReference type="eggNOG" id="COG0728">
    <property type="taxonomic scope" value="Bacteria"/>
</dbReference>
<dbReference type="HOGENOM" id="CLU_497572_0_0_0"/>
<dbReference type="OrthoDB" id="9804143at2"/>
<dbReference type="UniPathway" id="UPA00219"/>
<dbReference type="Proteomes" id="UP000000583">
    <property type="component" value="Chromosome"/>
</dbReference>
<dbReference type="Proteomes" id="UP000000801">
    <property type="component" value="Chromosome"/>
</dbReference>
<dbReference type="GO" id="GO:0005886">
    <property type="term" value="C:plasma membrane"/>
    <property type="evidence" value="ECO:0007669"/>
    <property type="project" value="UniProtKB-SubCell"/>
</dbReference>
<dbReference type="GO" id="GO:0071555">
    <property type="term" value="P:cell wall organization"/>
    <property type="evidence" value="ECO:0007669"/>
    <property type="project" value="UniProtKB-KW"/>
</dbReference>
<dbReference type="GO" id="GO:0009252">
    <property type="term" value="P:peptidoglycan biosynthetic process"/>
    <property type="evidence" value="ECO:0007669"/>
    <property type="project" value="UniProtKB-UniPathway"/>
</dbReference>
<dbReference type="GO" id="GO:0008360">
    <property type="term" value="P:regulation of cell shape"/>
    <property type="evidence" value="ECO:0007669"/>
    <property type="project" value="UniProtKB-KW"/>
</dbReference>
<dbReference type="CDD" id="cd13123">
    <property type="entry name" value="MATE_MurJ_like"/>
    <property type="match status" value="1"/>
</dbReference>
<dbReference type="InterPro" id="IPR052031">
    <property type="entry name" value="Membrane_Transporter-Flippase"/>
</dbReference>
<dbReference type="InterPro" id="IPR004268">
    <property type="entry name" value="MurJ"/>
</dbReference>
<dbReference type="PANTHER" id="PTHR43549">
    <property type="entry name" value="MULTIDRUG RESISTANCE PROTEIN YPNP-RELATED"/>
    <property type="match status" value="1"/>
</dbReference>
<dbReference type="PANTHER" id="PTHR43549:SF3">
    <property type="entry name" value="MULTIDRUG RESISTANCE PROTEIN YPNP-RELATED"/>
    <property type="match status" value="1"/>
</dbReference>
<dbReference type="Pfam" id="PF03023">
    <property type="entry name" value="MurJ"/>
    <property type="match status" value="1"/>
</dbReference>
<dbReference type="PRINTS" id="PR01806">
    <property type="entry name" value="VIRFACTRMVIN"/>
</dbReference>
<feature type="chain" id="PRO_0000182004" description="Probable lipid II flippase MurJ">
    <location>
        <begin position="1"/>
        <end position="547"/>
    </location>
</feature>
<feature type="transmembrane region" description="Helical" evidence="2">
    <location>
        <begin position="32"/>
        <end position="52"/>
    </location>
</feature>
<feature type="transmembrane region" description="Helical" evidence="2">
    <location>
        <begin position="55"/>
        <end position="75"/>
    </location>
</feature>
<feature type="transmembrane region" description="Helical" evidence="2">
    <location>
        <begin position="96"/>
        <end position="116"/>
    </location>
</feature>
<feature type="transmembrane region" description="Helical" evidence="2">
    <location>
        <begin position="122"/>
        <end position="142"/>
    </location>
</feature>
<feature type="transmembrane region" description="Helical" evidence="2">
    <location>
        <begin position="156"/>
        <end position="176"/>
    </location>
</feature>
<feature type="transmembrane region" description="Helical" evidence="2">
    <location>
        <begin position="186"/>
        <end position="206"/>
    </location>
</feature>
<feature type="transmembrane region" description="Helical" evidence="2">
    <location>
        <begin position="227"/>
        <end position="247"/>
    </location>
</feature>
<feature type="transmembrane region" description="Helical" evidence="2">
    <location>
        <begin position="270"/>
        <end position="290"/>
    </location>
</feature>
<feature type="transmembrane region" description="Helical" evidence="2">
    <location>
        <begin position="308"/>
        <end position="328"/>
    </location>
</feature>
<feature type="transmembrane region" description="Helical" evidence="2">
    <location>
        <begin position="355"/>
        <end position="375"/>
    </location>
</feature>
<feature type="transmembrane region" description="Helical" evidence="2">
    <location>
        <begin position="380"/>
        <end position="400"/>
    </location>
</feature>
<feature type="transmembrane region" description="Helical" evidence="2">
    <location>
        <begin position="408"/>
        <end position="428"/>
    </location>
</feature>
<feature type="transmembrane region" description="Helical" evidence="2">
    <location>
        <begin position="457"/>
        <end position="477"/>
    </location>
</feature>
<feature type="transmembrane region" description="Helical" evidence="2">
    <location>
        <begin position="495"/>
        <end position="515"/>
    </location>
</feature>
<proteinExistence type="inferred from homology"/>
<evidence type="ECO:0000250" key="1">
    <source>
        <dbReference type="UniProtKB" id="P0AF16"/>
    </source>
</evidence>
<evidence type="ECO:0000255" key="2"/>
<evidence type="ECO:0000305" key="3"/>
<organism>
    <name type="scientific">Chlamydia pneumoniae</name>
    <name type="common">Chlamydophila pneumoniae</name>
    <dbReference type="NCBI Taxonomy" id="83558"/>
    <lineage>
        <taxon>Bacteria</taxon>
        <taxon>Pseudomonadati</taxon>
        <taxon>Chlamydiota</taxon>
        <taxon>Chlamydiia</taxon>
        <taxon>Chlamydiales</taxon>
        <taxon>Chlamydiaceae</taxon>
        <taxon>Chlamydia/Chlamydophila group</taxon>
        <taxon>Chlamydia</taxon>
    </lineage>
</organism>
<gene>
    <name type="primary">murJ</name>
    <name type="synonym">mviN</name>
    <name type="ordered locus">CPn_0730</name>
    <name type="ordered locus">CP_0016</name>
    <name type="ordered locus">CpB0758</name>
</gene>
<name>MURJ_CHLPN</name>
<accession>Q9Z7H5</accession>
<accession>Q9JQF1</accession>
<keyword id="KW-0997">Cell inner membrane</keyword>
<keyword id="KW-1003">Cell membrane</keyword>
<keyword id="KW-0133">Cell shape</keyword>
<keyword id="KW-0961">Cell wall biogenesis/degradation</keyword>
<keyword id="KW-0472">Membrane</keyword>
<keyword id="KW-0573">Peptidoglycan synthesis</keyword>
<keyword id="KW-0812">Transmembrane</keyword>
<keyword id="KW-1133">Transmembrane helix</keyword>
<keyword id="KW-0813">Transport</keyword>